<organism>
    <name type="scientific">Staphylococcus epidermidis (strain ATCC 12228 / FDA PCI 1200)</name>
    <dbReference type="NCBI Taxonomy" id="176280"/>
    <lineage>
        <taxon>Bacteria</taxon>
        <taxon>Bacillati</taxon>
        <taxon>Bacillota</taxon>
        <taxon>Bacilli</taxon>
        <taxon>Bacillales</taxon>
        <taxon>Staphylococcaceae</taxon>
        <taxon>Staphylococcus</taxon>
    </lineage>
</organism>
<protein>
    <recommendedName>
        <fullName>Uncharacterized N-acetyltransferase SE_0851</fullName>
        <ecNumber>2.3.1.-</ecNumber>
    </recommendedName>
</protein>
<keyword id="KW-0012">Acyltransferase</keyword>
<keyword id="KW-0808">Transferase</keyword>
<feature type="chain" id="PRO_0000232488" description="Uncharacterized N-acetyltransferase SE_0851">
    <location>
        <begin position="1"/>
        <end position="146"/>
    </location>
</feature>
<feature type="domain" description="N-acetyltransferase">
    <location>
        <begin position="7"/>
        <end position="146"/>
    </location>
</feature>
<gene>
    <name type="ordered locus">SE_0851</name>
</gene>
<reference key="1">
    <citation type="journal article" date="2003" name="Mol. Microbiol.">
        <title>Genome-based analysis of virulence genes in a non-biofilm-forming Staphylococcus epidermidis strain (ATCC 12228).</title>
        <authorList>
            <person name="Zhang Y.-Q."/>
            <person name="Ren S.-X."/>
            <person name="Li H.-L."/>
            <person name="Wang Y.-X."/>
            <person name="Fu G."/>
            <person name="Yang J."/>
            <person name="Qin Z.-Q."/>
            <person name="Miao Y.-G."/>
            <person name="Wang W.-Y."/>
            <person name="Chen R.-S."/>
            <person name="Shen Y."/>
            <person name="Chen Z."/>
            <person name="Yuan Z.-H."/>
            <person name="Zhao G.-P."/>
            <person name="Qu D."/>
            <person name="Danchin A."/>
            <person name="Wen Y.-M."/>
        </authorList>
    </citation>
    <scope>NUCLEOTIDE SEQUENCE [LARGE SCALE GENOMIC DNA]</scope>
    <source>
        <strain>ATCC 12228 / FDA PCI 1200</strain>
    </source>
</reference>
<dbReference type="EC" id="2.3.1.-"/>
<dbReference type="EMBL" id="AE015929">
    <property type="protein sequence ID" value="AAO04448.1"/>
    <property type="molecule type" value="Genomic_DNA"/>
</dbReference>
<dbReference type="RefSeq" id="NP_764406.1">
    <property type="nucleotide sequence ID" value="NC_004461.1"/>
</dbReference>
<dbReference type="RefSeq" id="WP_001830066.1">
    <property type="nucleotide sequence ID" value="NZ_WBME01000036.1"/>
</dbReference>
<dbReference type="SMR" id="Q8CSY0"/>
<dbReference type="DNASU" id="1056194"/>
<dbReference type="KEGG" id="sep:SE_0851"/>
<dbReference type="PATRIC" id="fig|176280.10.peg.824"/>
<dbReference type="eggNOG" id="COG0454">
    <property type="taxonomic scope" value="Bacteria"/>
</dbReference>
<dbReference type="HOGENOM" id="CLU_136634_0_0_9"/>
<dbReference type="OrthoDB" id="2242710at2"/>
<dbReference type="Proteomes" id="UP000001411">
    <property type="component" value="Chromosome"/>
</dbReference>
<dbReference type="GO" id="GO:0016747">
    <property type="term" value="F:acyltransferase activity, transferring groups other than amino-acyl groups"/>
    <property type="evidence" value="ECO:0007669"/>
    <property type="project" value="UniProtKB-UniRule"/>
</dbReference>
<dbReference type="CDD" id="cd04301">
    <property type="entry name" value="NAT_SF"/>
    <property type="match status" value="1"/>
</dbReference>
<dbReference type="Gene3D" id="3.40.630.30">
    <property type="match status" value="1"/>
</dbReference>
<dbReference type="HAMAP" id="MF_00824">
    <property type="entry name" value="Acetyltransf_YlbP"/>
    <property type="match status" value="1"/>
</dbReference>
<dbReference type="InterPro" id="IPR016181">
    <property type="entry name" value="Acyl_CoA_acyltransferase"/>
</dbReference>
<dbReference type="InterPro" id="IPR000182">
    <property type="entry name" value="GNAT_dom"/>
</dbReference>
<dbReference type="InterPro" id="IPR017274">
    <property type="entry name" value="YlbP"/>
</dbReference>
<dbReference type="NCBIfam" id="NF010241">
    <property type="entry name" value="PRK13688.1"/>
    <property type="match status" value="1"/>
</dbReference>
<dbReference type="Pfam" id="PF13508">
    <property type="entry name" value="Acetyltransf_7"/>
    <property type="match status" value="1"/>
</dbReference>
<dbReference type="PIRSF" id="PIRSF037732">
    <property type="entry name" value="YlbP_prd"/>
    <property type="match status" value="1"/>
</dbReference>
<dbReference type="SUPFAM" id="SSF55729">
    <property type="entry name" value="Acyl-CoA N-acyltransferases (Nat)"/>
    <property type="match status" value="1"/>
</dbReference>
<dbReference type="PROSITE" id="PS51186">
    <property type="entry name" value="GNAT"/>
    <property type="match status" value="1"/>
</dbReference>
<sequence>MGEVKHLQINYKTDELFADFREFGNKNLYMIEELKGQMIDASSDSPFYGIFVGNKLVARMALLDKGEVEETYFPNSNDYILLWKLEVLDTYQRRGYAKQLLNFAKENKKPIKAIARNNSKEFFLKQGFKDVETKNPEGHDILIWNP</sequence>
<name>Y851_STAES</name>
<accession>Q8CSY0</accession>
<proteinExistence type="inferred from homology"/>